<proteinExistence type="inferred from homology"/>
<sequence length="242" mass="25896">MEPKYQRILIKLSGEALAGEKGVGIDIPTVQAIAKEIAEVHVSGVQIALVIGGGNLWRGEPAADAGMDRVQADYTGMLGTVMNALVMADSLQHYGVDTRVQTAIPMQNVAEPYIRGRALRHLEKNRIVVFGAGIGSPYFSTDTTAALRAAEIEADAILMAKNGVDGVYNADPKKDANAVKFDELTHGEVIKRGLKIMDATASTLSMDNDIDLVVFNMNEAGNIQRVVFGEHIGTTVSNKVCD</sequence>
<protein>
    <recommendedName>
        <fullName evidence="1">Uridylate kinase</fullName>
        <shortName evidence="1">UK</shortName>
        <ecNumber evidence="1">2.7.4.22</ecNumber>
    </recommendedName>
    <alternativeName>
        <fullName evidence="1">Uridine monophosphate kinase</fullName>
        <shortName evidence="1">UMP kinase</shortName>
        <shortName evidence="1">UMPK</shortName>
    </alternativeName>
</protein>
<accession>Q48UX7</accession>
<name>PYRH_STRPM</name>
<keyword id="KW-0021">Allosteric enzyme</keyword>
<keyword id="KW-0067">ATP-binding</keyword>
<keyword id="KW-0963">Cytoplasm</keyword>
<keyword id="KW-0418">Kinase</keyword>
<keyword id="KW-0547">Nucleotide-binding</keyword>
<keyword id="KW-0665">Pyrimidine biosynthesis</keyword>
<keyword id="KW-0808">Transferase</keyword>
<comment type="function">
    <text evidence="1">Catalyzes the reversible phosphorylation of UMP to UDP.</text>
</comment>
<comment type="catalytic activity">
    <reaction evidence="1">
        <text>UMP + ATP = UDP + ADP</text>
        <dbReference type="Rhea" id="RHEA:24400"/>
        <dbReference type="ChEBI" id="CHEBI:30616"/>
        <dbReference type="ChEBI" id="CHEBI:57865"/>
        <dbReference type="ChEBI" id="CHEBI:58223"/>
        <dbReference type="ChEBI" id="CHEBI:456216"/>
        <dbReference type="EC" id="2.7.4.22"/>
    </reaction>
</comment>
<comment type="activity regulation">
    <text evidence="1">Allosterically activated by GTP. Inhibited by UTP.</text>
</comment>
<comment type="pathway">
    <text evidence="1">Pyrimidine metabolism; CTP biosynthesis via de novo pathway; UDP from UMP (UMPK route): step 1/1.</text>
</comment>
<comment type="subunit">
    <text evidence="1">Homohexamer.</text>
</comment>
<comment type="subcellular location">
    <subcellularLocation>
        <location evidence="1">Cytoplasm</location>
    </subcellularLocation>
</comment>
<comment type="similarity">
    <text evidence="1">Belongs to the UMP kinase family.</text>
</comment>
<organism>
    <name type="scientific">Streptococcus pyogenes serotype M28 (strain MGAS6180)</name>
    <dbReference type="NCBI Taxonomy" id="319701"/>
    <lineage>
        <taxon>Bacteria</taxon>
        <taxon>Bacillati</taxon>
        <taxon>Bacillota</taxon>
        <taxon>Bacilli</taxon>
        <taxon>Lactobacillales</taxon>
        <taxon>Streptococcaceae</taxon>
        <taxon>Streptococcus</taxon>
    </lineage>
</organism>
<evidence type="ECO:0000255" key="1">
    <source>
        <dbReference type="HAMAP-Rule" id="MF_01220"/>
    </source>
</evidence>
<reference key="1">
    <citation type="journal article" date="2005" name="J. Infect. Dis.">
        <title>Genome sequence of a serotype M28 strain of group A Streptococcus: potential new insights into puerperal sepsis and bacterial disease specificity.</title>
        <authorList>
            <person name="Green N.M."/>
            <person name="Zhang S."/>
            <person name="Porcella S.F."/>
            <person name="Nagiec M.J."/>
            <person name="Barbian K.D."/>
            <person name="Beres S.B."/>
            <person name="Lefebvre R.B."/>
            <person name="Musser J.M."/>
        </authorList>
    </citation>
    <scope>NUCLEOTIDE SEQUENCE [LARGE SCALE GENOMIC DNA]</scope>
    <source>
        <strain>MGAS6180</strain>
    </source>
</reference>
<feature type="chain" id="PRO_1000054037" description="Uridylate kinase">
    <location>
        <begin position="1"/>
        <end position="242"/>
    </location>
</feature>
<feature type="region of interest" description="Involved in allosteric activation by GTP" evidence="1">
    <location>
        <begin position="19"/>
        <end position="24"/>
    </location>
</feature>
<feature type="binding site" evidence="1">
    <location>
        <begin position="11"/>
        <end position="14"/>
    </location>
    <ligand>
        <name>ATP</name>
        <dbReference type="ChEBI" id="CHEBI:30616"/>
    </ligand>
</feature>
<feature type="binding site" evidence="1">
    <location>
        <position position="53"/>
    </location>
    <ligand>
        <name>UMP</name>
        <dbReference type="ChEBI" id="CHEBI:57865"/>
    </ligand>
</feature>
<feature type="binding site" evidence="1">
    <location>
        <position position="54"/>
    </location>
    <ligand>
        <name>ATP</name>
        <dbReference type="ChEBI" id="CHEBI:30616"/>
    </ligand>
</feature>
<feature type="binding site" evidence="1">
    <location>
        <position position="58"/>
    </location>
    <ligand>
        <name>ATP</name>
        <dbReference type="ChEBI" id="CHEBI:30616"/>
    </ligand>
</feature>
<feature type="binding site" evidence="1">
    <location>
        <position position="73"/>
    </location>
    <ligand>
        <name>UMP</name>
        <dbReference type="ChEBI" id="CHEBI:57865"/>
    </ligand>
</feature>
<feature type="binding site" evidence="1">
    <location>
        <begin position="134"/>
        <end position="141"/>
    </location>
    <ligand>
        <name>UMP</name>
        <dbReference type="ChEBI" id="CHEBI:57865"/>
    </ligand>
</feature>
<feature type="binding site" evidence="1">
    <location>
        <position position="162"/>
    </location>
    <ligand>
        <name>ATP</name>
        <dbReference type="ChEBI" id="CHEBI:30616"/>
    </ligand>
</feature>
<feature type="binding site" evidence="1">
    <location>
        <position position="168"/>
    </location>
    <ligand>
        <name>ATP</name>
        <dbReference type="ChEBI" id="CHEBI:30616"/>
    </ligand>
</feature>
<feature type="binding site" evidence="1">
    <location>
        <position position="171"/>
    </location>
    <ligand>
        <name>ATP</name>
        <dbReference type="ChEBI" id="CHEBI:30616"/>
    </ligand>
</feature>
<gene>
    <name evidence="1" type="primary">pyrH</name>
    <name type="ordered locus">M28_Spy0365</name>
</gene>
<dbReference type="EC" id="2.7.4.22" evidence="1"/>
<dbReference type="EMBL" id="CP000056">
    <property type="protein sequence ID" value="AAX71479.1"/>
    <property type="molecule type" value="Genomic_DNA"/>
</dbReference>
<dbReference type="RefSeq" id="WP_002985765.1">
    <property type="nucleotide sequence ID" value="NC_007296.2"/>
</dbReference>
<dbReference type="SMR" id="Q48UX7"/>
<dbReference type="GeneID" id="69901300"/>
<dbReference type="KEGG" id="spb:M28_Spy0365"/>
<dbReference type="HOGENOM" id="CLU_033861_0_0_9"/>
<dbReference type="UniPathway" id="UPA00159">
    <property type="reaction ID" value="UER00275"/>
</dbReference>
<dbReference type="GO" id="GO:0005737">
    <property type="term" value="C:cytoplasm"/>
    <property type="evidence" value="ECO:0007669"/>
    <property type="project" value="UniProtKB-SubCell"/>
</dbReference>
<dbReference type="GO" id="GO:0005524">
    <property type="term" value="F:ATP binding"/>
    <property type="evidence" value="ECO:0007669"/>
    <property type="project" value="UniProtKB-KW"/>
</dbReference>
<dbReference type="GO" id="GO:0033862">
    <property type="term" value="F:UMP kinase activity"/>
    <property type="evidence" value="ECO:0007669"/>
    <property type="project" value="UniProtKB-EC"/>
</dbReference>
<dbReference type="GO" id="GO:0044210">
    <property type="term" value="P:'de novo' CTP biosynthetic process"/>
    <property type="evidence" value="ECO:0007669"/>
    <property type="project" value="UniProtKB-UniRule"/>
</dbReference>
<dbReference type="GO" id="GO:0006225">
    <property type="term" value="P:UDP biosynthetic process"/>
    <property type="evidence" value="ECO:0007669"/>
    <property type="project" value="TreeGrafter"/>
</dbReference>
<dbReference type="CDD" id="cd04254">
    <property type="entry name" value="AAK_UMPK-PyrH-Ec"/>
    <property type="match status" value="1"/>
</dbReference>
<dbReference type="FunFam" id="3.40.1160.10:FF:000019">
    <property type="entry name" value="Uridylate kinase"/>
    <property type="match status" value="1"/>
</dbReference>
<dbReference type="Gene3D" id="3.40.1160.10">
    <property type="entry name" value="Acetylglutamate kinase-like"/>
    <property type="match status" value="1"/>
</dbReference>
<dbReference type="HAMAP" id="MF_01220_B">
    <property type="entry name" value="PyrH_B"/>
    <property type="match status" value="1"/>
</dbReference>
<dbReference type="InterPro" id="IPR036393">
    <property type="entry name" value="AceGlu_kinase-like_sf"/>
</dbReference>
<dbReference type="InterPro" id="IPR001048">
    <property type="entry name" value="Asp/Glu/Uridylate_kinase"/>
</dbReference>
<dbReference type="InterPro" id="IPR011817">
    <property type="entry name" value="Uridylate_kinase"/>
</dbReference>
<dbReference type="InterPro" id="IPR015963">
    <property type="entry name" value="Uridylate_kinase_bac"/>
</dbReference>
<dbReference type="NCBIfam" id="TIGR02075">
    <property type="entry name" value="pyrH_bact"/>
    <property type="match status" value="1"/>
</dbReference>
<dbReference type="PANTHER" id="PTHR42833">
    <property type="entry name" value="URIDYLATE KINASE"/>
    <property type="match status" value="1"/>
</dbReference>
<dbReference type="PANTHER" id="PTHR42833:SF4">
    <property type="entry name" value="URIDYLATE KINASE PUMPKIN, CHLOROPLASTIC"/>
    <property type="match status" value="1"/>
</dbReference>
<dbReference type="Pfam" id="PF00696">
    <property type="entry name" value="AA_kinase"/>
    <property type="match status" value="1"/>
</dbReference>
<dbReference type="PIRSF" id="PIRSF005650">
    <property type="entry name" value="Uridylate_kin"/>
    <property type="match status" value="1"/>
</dbReference>
<dbReference type="SUPFAM" id="SSF53633">
    <property type="entry name" value="Carbamate kinase-like"/>
    <property type="match status" value="1"/>
</dbReference>